<reference key="1">
    <citation type="journal article" date="2009" name="Genome Biol.">
        <title>Genomic and genetic analyses of diversity and plant interactions of Pseudomonas fluorescens.</title>
        <authorList>
            <person name="Silby M.W."/>
            <person name="Cerdeno-Tarraga A.M."/>
            <person name="Vernikos G.S."/>
            <person name="Giddens S.R."/>
            <person name="Jackson R.W."/>
            <person name="Preston G.M."/>
            <person name="Zhang X.-X."/>
            <person name="Moon C.D."/>
            <person name="Gehrig S.M."/>
            <person name="Godfrey S.A.C."/>
            <person name="Knight C.G."/>
            <person name="Malone J.G."/>
            <person name="Robinson Z."/>
            <person name="Spiers A.J."/>
            <person name="Harris S."/>
            <person name="Challis G.L."/>
            <person name="Yaxley A.M."/>
            <person name="Harris D."/>
            <person name="Seeger K."/>
            <person name="Murphy L."/>
            <person name="Rutter S."/>
            <person name="Squares R."/>
            <person name="Quail M.A."/>
            <person name="Saunders E."/>
            <person name="Mavromatis K."/>
            <person name="Brettin T.S."/>
            <person name="Bentley S.D."/>
            <person name="Hothersall J."/>
            <person name="Stephens E."/>
            <person name="Thomas C.M."/>
            <person name="Parkhill J."/>
            <person name="Levy S.B."/>
            <person name="Rainey P.B."/>
            <person name="Thomson N.R."/>
        </authorList>
    </citation>
    <scope>NUCLEOTIDE SEQUENCE [LARGE SCALE GENOMIC DNA]</scope>
    <source>
        <strain>Pf0-1</strain>
    </source>
</reference>
<sequence>MLLHIPALFEKDEVRRIREALEQADWADGKITAGYQSAKAKHNLQLPEGHPLAKEIGAAMLERLWKNPLFMSAALPHKVFPPLLNCYTAGGSFDFHIDNAVRQPKGSIERVRTDLSATLFFSEPEDYDGGELEIQDTFGTQRVKLPAGDMVLYPGTSLHKVNAVTRGARYASFFWTQSLVREDSQRALLFEMDGAIQQLTHDMPDHPSLIRLTGTYHNLLRRWVEV</sequence>
<keyword id="KW-0223">Dioxygenase</keyword>
<keyword id="KW-0408">Iron</keyword>
<keyword id="KW-0479">Metal-binding</keyword>
<keyword id="KW-0560">Oxidoreductase</keyword>
<keyword id="KW-0847">Vitamin C</keyword>
<feature type="chain" id="PRO_1000061732" description="PKHD-type hydroxylase Pfl01_0799">
    <location>
        <begin position="1"/>
        <end position="226"/>
    </location>
</feature>
<feature type="domain" description="Fe2OG dioxygenase" evidence="1">
    <location>
        <begin position="78"/>
        <end position="178"/>
    </location>
</feature>
<feature type="binding site" evidence="1">
    <location>
        <position position="96"/>
    </location>
    <ligand>
        <name>Fe cation</name>
        <dbReference type="ChEBI" id="CHEBI:24875"/>
    </ligand>
</feature>
<feature type="binding site" evidence="1">
    <location>
        <position position="98"/>
    </location>
    <ligand>
        <name>Fe cation</name>
        <dbReference type="ChEBI" id="CHEBI:24875"/>
    </ligand>
</feature>
<feature type="binding site" evidence="1">
    <location>
        <position position="159"/>
    </location>
    <ligand>
        <name>Fe cation</name>
        <dbReference type="ChEBI" id="CHEBI:24875"/>
    </ligand>
</feature>
<feature type="binding site" evidence="1">
    <location>
        <position position="169"/>
    </location>
    <ligand>
        <name>2-oxoglutarate</name>
        <dbReference type="ChEBI" id="CHEBI:16810"/>
    </ligand>
</feature>
<evidence type="ECO:0000255" key="1">
    <source>
        <dbReference type="HAMAP-Rule" id="MF_00657"/>
    </source>
</evidence>
<proteinExistence type="inferred from homology"/>
<accession>Q3KI64</accession>
<gene>
    <name type="ordered locus">Pfl01_0799</name>
</gene>
<name>Y799_PSEPF</name>
<comment type="cofactor">
    <cofactor evidence="1">
        <name>Fe(2+)</name>
        <dbReference type="ChEBI" id="CHEBI:29033"/>
    </cofactor>
    <text evidence="1">Binds 1 Fe(2+) ion per subunit.</text>
</comment>
<comment type="cofactor">
    <cofactor evidence="1">
        <name>L-ascorbate</name>
        <dbReference type="ChEBI" id="CHEBI:38290"/>
    </cofactor>
</comment>
<organism>
    <name type="scientific">Pseudomonas fluorescens (strain Pf0-1)</name>
    <dbReference type="NCBI Taxonomy" id="205922"/>
    <lineage>
        <taxon>Bacteria</taxon>
        <taxon>Pseudomonadati</taxon>
        <taxon>Pseudomonadota</taxon>
        <taxon>Gammaproteobacteria</taxon>
        <taxon>Pseudomonadales</taxon>
        <taxon>Pseudomonadaceae</taxon>
        <taxon>Pseudomonas</taxon>
    </lineage>
</organism>
<protein>
    <recommendedName>
        <fullName evidence="1">PKHD-type hydroxylase Pfl01_0799</fullName>
        <ecNumber evidence="1">1.14.11.-</ecNumber>
    </recommendedName>
</protein>
<dbReference type="EC" id="1.14.11.-" evidence="1"/>
<dbReference type="EMBL" id="CP000094">
    <property type="protein sequence ID" value="ABA72542.1"/>
    <property type="molecule type" value="Genomic_DNA"/>
</dbReference>
<dbReference type="RefSeq" id="WP_011332426.1">
    <property type="nucleotide sequence ID" value="NC_007492.2"/>
</dbReference>
<dbReference type="SMR" id="Q3KI64"/>
<dbReference type="KEGG" id="pfo:Pfl01_0799"/>
<dbReference type="eggNOG" id="COG3128">
    <property type="taxonomic scope" value="Bacteria"/>
</dbReference>
<dbReference type="HOGENOM" id="CLU_106663_0_0_6"/>
<dbReference type="Proteomes" id="UP000002704">
    <property type="component" value="Chromosome"/>
</dbReference>
<dbReference type="GO" id="GO:0016706">
    <property type="term" value="F:2-oxoglutarate-dependent dioxygenase activity"/>
    <property type="evidence" value="ECO:0007669"/>
    <property type="project" value="UniProtKB-UniRule"/>
</dbReference>
<dbReference type="GO" id="GO:0005506">
    <property type="term" value="F:iron ion binding"/>
    <property type="evidence" value="ECO:0007669"/>
    <property type="project" value="UniProtKB-UniRule"/>
</dbReference>
<dbReference type="GO" id="GO:0031418">
    <property type="term" value="F:L-ascorbic acid binding"/>
    <property type="evidence" value="ECO:0007669"/>
    <property type="project" value="UniProtKB-KW"/>
</dbReference>
<dbReference type="GO" id="GO:0006974">
    <property type="term" value="P:DNA damage response"/>
    <property type="evidence" value="ECO:0007669"/>
    <property type="project" value="TreeGrafter"/>
</dbReference>
<dbReference type="GO" id="GO:0006879">
    <property type="term" value="P:intracellular iron ion homeostasis"/>
    <property type="evidence" value="ECO:0007669"/>
    <property type="project" value="TreeGrafter"/>
</dbReference>
<dbReference type="Gene3D" id="2.60.120.620">
    <property type="entry name" value="q2cbj1_9rhob like domain"/>
    <property type="match status" value="1"/>
</dbReference>
<dbReference type="Gene3D" id="4.10.860.20">
    <property type="entry name" value="Rabenosyn, Rab binding domain"/>
    <property type="match status" value="1"/>
</dbReference>
<dbReference type="HAMAP" id="MF_00657">
    <property type="entry name" value="Hydroxyl_YbiX"/>
    <property type="match status" value="1"/>
</dbReference>
<dbReference type="InterPro" id="IPR005123">
    <property type="entry name" value="Oxoglu/Fe-dep_dioxygenase_dom"/>
</dbReference>
<dbReference type="InterPro" id="IPR041097">
    <property type="entry name" value="PKHD_C"/>
</dbReference>
<dbReference type="InterPro" id="IPR023550">
    <property type="entry name" value="PKHD_hydroxylase"/>
</dbReference>
<dbReference type="InterPro" id="IPR006620">
    <property type="entry name" value="Pro_4_hyd_alph"/>
</dbReference>
<dbReference type="InterPro" id="IPR044862">
    <property type="entry name" value="Pro_4_hyd_alph_FE2OG_OXY"/>
</dbReference>
<dbReference type="NCBIfam" id="NF003974">
    <property type="entry name" value="PRK05467.1-3"/>
    <property type="match status" value="1"/>
</dbReference>
<dbReference type="NCBIfam" id="NF003975">
    <property type="entry name" value="PRK05467.1-4"/>
    <property type="match status" value="1"/>
</dbReference>
<dbReference type="PANTHER" id="PTHR41536">
    <property type="entry name" value="PKHD-TYPE HYDROXYLASE YBIX"/>
    <property type="match status" value="1"/>
</dbReference>
<dbReference type="PANTHER" id="PTHR41536:SF1">
    <property type="entry name" value="PKHD-TYPE HYDROXYLASE YBIX"/>
    <property type="match status" value="1"/>
</dbReference>
<dbReference type="Pfam" id="PF13640">
    <property type="entry name" value="2OG-FeII_Oxy_3"/>
    <property type="match status" value="1"/>
</dbReference>
<dbReference type="Pfam" id="PF18331">
    <property type="entry name" value="PKHD_C"/>
    <property type="match status" value="1"/>
</dbReference>
<dbReference type="SMART" id="SM00702">
    <property type="entry name" value="P4Hc"/>
    <property type="match status" value="1"/>
</dbReference>
<dbReference type="PROSITE" id="PS51471">
    <property type="entry name" value="FE2OG_OXY"/>
    <property type="match status" value="1"/>
</dbReference>